<reference key="1">
    <citation type="submission" date="2007-05" db="EMBL/GenBank/DDBJ databases">
        <title>Complete sequence of chromosome of Staphylococcus aureus subsp. aureus JH9.</title>
        <authorList>
            <consortium name="US DOE Joint Genome Institute"/>
            <person name="Copeland A."/>
            <person name="Lucas S."/>
            <person name="Lapidus A."/>
            <person name="Barry K."/>
            <person name="Detter J.C."/>
            <person name="Glavina del Rio T."/>
            <person name="Hammon N."/>
            <person name="Israni S."/>
            <person name="Pitluck S."/>
            <person name="Chain P."/>
            <person name="Malfatti S."/>
            <person name="Shin M."/>
            <person name="Vergez L."/>
            <person name="Schmutz J."/>
            <person name="Larimer F."/>
            <person name="Land M."/>
            <person name="Hauser L."/>
            <person name="Kyrpides N."/>
            <person name="Kim E."/>
            <person name="Tomasz A."/>
            <person name="Richardson P."/>
        </authorList>
    </citation>
    <scope>NUCLEOTIDE SEQUENCE [LARGE SCALE GENOMIC DNA]</scope>
    <source>
        <strain>JH9</strain>
    </source>
</reference>
<organism>
    <name type="scientific">Staphylococcus aureus (strain JH9)</name>
    <dbReference type="NCBI Taxonomy" id="359786"/>
    <lineage>
        <taxon>Bacteria</taxon>
        <taxon>Bacillati</taxon>
        <taxon>Bacillota</taxon>
        <taxon>Bacilli</taxon>
        <taxon>Bacillales</taxon>
        <taxon>Staphylococcaceae</taxon>
        <taxon>Staphylococcus</taxon>
    </lineage>
</organism>
<gene>
    <name evidence="1" type="primary">mutS</name>
    <name type="ordered locus">SaurJH9_1355</name>
</gene>
<name>MUTS_STAA9</name>
<comment type="function">
    <text evidence="1">This protein is involved in the repair of mismatches in DNA. It is possible that it carries out the mismatch recognition step. This protein has a weak ATPase activity.</text>
</comment>
<comment type="similarity">
    <text evidence="1">Belongs to the DNA mismatch repair MutS family.</text>
</comment>
<proteinExistence type="inferred from homology"/>
<evidence type="ECO:0000255" key="1">
    <source>
        <dbReference type="HAMAP-Rule" id="MF_00096"/>
    </source>
</evidence>
<dbReference type="EMBL" id="CP000703">
    <property type="protein sequence ID" value="ABQ49152.1"/>
    <property type="molecule type" value="Genomic_DNA"/>
</dbReference>
<dbReference type="RefSeq" id="WP_000073352.1">
    <property type="nucleotide sequence ID" value="NC_009487.1"/>
</dbReference>
<dbReference type="SMR" id="A5ISH9"/>
<dbReference type="KEGG" id="saj:SaurJH9_1355"/>
<dbReference type="HOGENOM" id="CLU_002472_4_0_9"/>
<dbReference type="GO" id="GO:0005829">
    <property type="term" value="C:cytosol"/>
    <property type="evidence" value="ECO:0007669"/>
    <property type="project" value="TreeGrafter"/>
</dbReference>
<dbReference type="GO" id="GO:0005524">
    <property type="term" value="F:ATP binding"/>
    <property type="evidence" value="ECO:0007669"/>
    <property type="project" value="UniProtKB-UniRule"/>
</dbReference>
<dbReference type="GO" id="GO:0140664">
    <property type="term" value="F:ATP-dependent DNA damage sensor activity"/>
    <property type="evidence" value="ECO:0007669"/>
    <property type="project" value="InterPro"/>
</dbReference>
<dbReference type="GO" id="GO:0003684">
    <property type="term" value="F:damaged DNA binding"/>
    <property type="evidence" value="ECO:0007669"/>
    <property type="project" value="UniProtKB-UniRule"/>
</dbReference>
<dbReference type="GO" id="GO:0030983">
    <property type="term" value="F:mismatched DNA binding"/>
    <property type="evidence" value="ECO:0007669"/>
    <property type="project" value="InterPro"/>
</dbReference>
<dbReference type="GO" id="GO:0006298">
    <property type="term" value="P:mismatch repair"/>
    <property type="evidence" value="ECO:0007669"/>
    <property type="project" value="UniProtKB-UniRule"/>
</dbReference>
<dbReference type="CDD" id="cd03284">
    <property type="entry name" value="ABC_MutS1"/>
    <property type="match status" value="1"/>
</dbReference>
<dbReference type="FunFam" id="1.10.1420.10:FF:000007">
    <property type="entry name" value="DNA mismatch repair protein MutS"/>
    <property type="match status" value="1"/>
</dbReference>
<dbReference type="FunFam" id="3.40.1170.10:FF:000001">
    <property type="entry name" value="DNA mismatch repair protein MutS"/>
    <property type="match status" value="1"/>
</dbReference>
<dbReference type="FunFam" id="3.40.50.300:FF:000896">
    <property type="entry name" value="DNA mismatch repair protein MutS"/>
    <property type="match status" value="1"/>
</dbReference>
<dbReference type="Gene3D" id="1.10.1420.10">
    <property type="match status" value="2"/>
</dbReference>
<dbReference type="Gene3D" id="3.40.1170.10">
    <property type="entry name" value="DNA repair protein MutS, domain I"/>
    <property type="match status" value="1"/>
</dbReference>
<dbReference type="Gene3D" id="3.30.420.110">
    <property type="entry name" value="MutS, connector domain"/>
    <property type="match status" value="1"/>
</dbReference>
<dbReference type="Gene3D" id="3.40.50.300">
    <property type="entry name" value="P-loop containing nucleotide triphosphate hydrolases"/>
    <property type="match status" value="1"/>
</dbReference>
<dbReference type="HAMAP" id="MF_00096">
    <property type="entry name" value="MutS"/>
    <property type="match status" value="1"/>
</dbReference>
<dbReference type="InterPro" id="IPR005748">
    <property type="entry name" value="DNA_mismatch_repair_MutS"/>
</dbReference>
<dbReference type="InterPro" id="IPR007695">
    <property type="entry name" value="DNA_mismatch_repair_MutS-lik_N"/>
</dbReference>
<dbReference type="InterPro" id="IPR017261">
    <property type="entry name" value="DNA_mismatch_repair_MutS/MSH"/>
</dbReference>
<dbReference type="InterPro" id="IPR000432">
    <property type="entry name" value="DNA_mismatch_repair_MutS_C"/>
</dbReference>
<dbReference type="InterPro" id="IPR007861">
    <property type="entry name" value="DNA_mismatch_repair_MutS_clamp"/>
</dbReference>
<dbReference type="InterPro" id="IPR007696">
    <property type="entry name" value="DNA_mismatch_repair_MutS_core"/>
</dbReference>
<dbReference type="InterPro" id="IPR016151">
    <property type="entry name" value="DNA_mismatch_repair_MutS_N"/>
</dbReference>
<dbReference type="InterPro" id="IPR036187">
    <property type="entry name" value="DNA_mismatch_repair_MutS_sf"/>
</dbReference>
<dbReference type="InterPro" id="IPR007860">
    <property type="entry name" value="DNA_mmatch_repair_MutS_con_dom"/>
</dbReference>
<dbReference type="InterPro" id="IPR045076">
    <property type="entry name" value="MutS"/>
</dbReference>
<dbReference type="InterPro" id="IPR036678">
    <property type="entry name" value="MutS_con_dom_sf"/>
</dbReference>
<dbReference type="InterPro" id="IPR027417">
    <property type="entry name" value="P-loop_NTPase"/>
</dbReference>
<dbReference type="NCBIfam" id="TIGR01070">
    <property type="entry name" value="mutS1"/>
    <property type="match status" value="1"/>
</dbReference>
<dbReference type="NCBIfam" id="NF003810">
    <property type="entry name" value="PRK05399.1"/>
    <property type="match status" value="1"/>
</dbReference>
<dbReference type="PANTHER" id="PTHR11361:SF34">
    <property type="entry name" value="DNA MISMATCH REPAIR PROTEIN MSH1, MITOCHONDRIAL"/>
    <property type="match status" value="1"/>
</dbReference>
<dbReference type="PANTHER" id="PTHR11361">
    <property type="entry name" value="DNA MISMATCH REPAIR PROTEIN MUTS FAMILY MEMBER"/>
    <property type="match status" value="1"/>
</dbReference>
<dbReference type="Pfam" id="PF01624">
    <property type="entry name" value="MutS_I"/>
    <property type="match status" value="1"/>
</dbReference>
<dbReference type="Pfam" id="PF05188">
    <property type="entry name" value="MutS_II"/>
    <property type="match status" value="1"/>
</dbReference>
<dbReference type="Pfam" id="PF05192">
    <property type="entry name" value="MutS_III"/>
    <property type="match status" value="1"/>
</dbReference>
<dbReference type="Pfam" id="PF05190">
    <property type="entry name" value="MutS_IV"/>
    <property type="match status" value="1"/>
</dbReference>
<dbReference type="Pfam" id="PF00488">
    <property type="entry name" value="MutS_V"/>
    <property type="match status" value="1"/>
</dbReference>
<dbReference type="PIRSF" id="PIRSF037677">
    <property type="entry name" value="DNA_mis_repair_Msh6"/>
    <property type="match status" value="1"/>
</dbReference>
<dbReference type="SMART" id="SM00534">
    <property type="entry name" value="MUTSac"/>
    <property type="match status" value="1"/>
</dbReference>
<dbReference type="SMART" id="SM00533">
    <property type="entry name" value="MUTSd"/>
    <property type="match status" value="1"/>
</dbReference>
<dbReference type="SUPFAM" id="SSF55271">
    <property type="entry name" value="DNA repair protein MutS, domain I"/>
    <property type="match status" value="1"/>
</dbReference>
<dbReference type="SUPFAM" id="SSF53150">
    <property type="entry name" value="DNA repair protein MutS, domain II"/>
    <property type="match status" value="1"/>
</dbReference>
<dbReference type="SUPFAM" id="SSF48334">
    <property type="entry name" value="DNA repair protein MutS, domain III"/>
    <property type="match status" value="1"/>
</dbReference>
<dbReference type="SUPFAM" id="SSF52540">
    <property type="entry name" value="P-loop containing nucleoside triphosphate hydrolases"/>
    <property type="match status" value="1"/>
</dbReference>
<dbReference type="PROSITE" id="PS00486">
    <property type="entry name" value="DNA_MISMATCH_REPAIR_2"/>
    <property type="match status" value="1"/>
</dbReference>
<accession>A5ISH9</accession>
<keyword id="KW-0067">ATP-binding</keyword>
<keyword id="KW-0227">DNA damage</keyword>
<keyword id="KW-0234">DNA repair</keyword>
<keyword id="KW-0238">DNA-binding</keyword>
<keyword id="KW-0547">Nucleotide-binding</keyword>
<feature type="chain" id="PRO_1000075565" description="DNA mismatch repair protein MutS">
    <location>
        <begin position="1"/>
        <end position="872"/>
    </location>
</feature>
<feature type="binding site" evidence="1">
    <location>
        <begin position="602"/>
        <end position="609"/>
    </location>
    <ligand>
        <name>ATP</name>
        <dbReference type="ChEBI" id="CHEBI:30616"/>
    </ligand>
</feature>
<protein>
    <recommendedName>
        <fullName evidence="1">DNA mismatch repair protein MutS</fullName>
    </recommendedName>
</protein>
<sequence length="872" mass="99904">MSNVTPMMQQYLKIKSEYQDCLLFFRLGDFYEMFYEDAKEASRVLEITLTKRDAKKENPIPMCGVPYHSADSYIDTLVNNGYKVAICEQMEDPKQTKGMVRREVVRIVTPGTVMEQGGVDDKQNNYILSFVMNQPEIALSYCDVSTGELKVTHFNDEATLLNEITTINPNEVVINDNISDNLKRQINMVTETITVRETLSSEIYSVNQTEHKLMYQATQLLLDYIHHTQKRDLSHIEDVVQYAAIDYMKMDFYAKRNLELTESIRLKSKKGTLLWLMDETKTPMGARRLKQWIDRPLISKEQIEARLDIVDEFSAHFIERDTLRTYLNQVYDIERLVGRVSYGNVNARDLIQLKHSISEIPNIKALLNSMNQNTLVQVNQLEPLDDLLDILEQSLVEEPPISVKDGGLFKVGFNTQLDEYLEASKNGKTWLAELQAKERQRTGIKSLKISFNKVFGYFIEITRANLQNFEPSEFGYMRKQTLSNAERFITDELKEKEDIILGAEDKAIELEYQLFVQLREEVKKYTERLQQQAKIISELDCLQSFAEIAQKYNYTRPSFSENKTLELVESRHPVVERVMDYNDYVPNNCRLDNETFIYLITGPNMSGKSTYMRQVAIISIMAQMGAYVPCKEAVLPIFDQIFTRIGAADDLVSGKSTFMVEMLEAQKALTYATEDSLIIFDEIGRGTSTYDGLALAQAMIEYVAETSHAKTLFSTHYHELTTLDQALPSLKNVHVAANEYKGELIFLHKVKDGAVDDSYGIQVAKLADLPEKVISRAQVILSEFEASAGKKSSISNLKMVENEPEINQENLNLSVEETTDTLSQKDFEQASFDLFENDQESEIELQIKNLNLSNMTPIEALVKLSELQNQLK</sequence>